<protein>
    <recommendedName>
        <fullName evidence="1">tRNA (guanine-N(1)-)-methyltransferase</fullName>
        <ecNumber evidence="1">2.1.1.228</ecNumber>
    </recommendedName>
    <alternativeName>
        <fullName evidence="1">M1G-methyltransferase</fullName>
    </alternativeName>
    <alternativeName>
        <fullName evidence="1">tRNA [GM37] methyltransferase</fullName>
    </alternativeName>
</protein>
<name>TRMD_SHEFN</name>
<dbReference type="EC" id="2.1.1.228" evidence="1"/>
<dbReference type="EMBL" id="CP000447">
    <property type="protein sequence ID" value="ABI72757.1"/>
    <property type="molecule type" value="Genomic_DNA"/>
</dbReference>
<dbReference type="RefSeq" id="WP_011638366.1">
    <property type="nucleotide sequence ID" value="NC_008345.1"/>
</dbReference>
<dbReference type="SMR" id="Q07Z07"/>
<dbReference type="STRING" id="318167.Sfri_2918"/>
<dbReference type="KEGG" id="sfr:Sfri_2918"/>
<dbReference type="eggNOG" id="COG0336">
    <property type="taxonomic scope" value="Bacteria"/>
</dbReference>
<dbReference type="HOGENOM" id="CLU_047363_0_1_6"/>
<dbReference type="OrthoDB" id="9807416at2"/>
<dbReference type="Proteomes" id="UP000000684">
    <property type="component" value="Chromosome"/>
</dbReference>
<dbReference type="GO" id="GO:0005829">
    <property type="term" value="C:cytosol"/>
    <property type="evidence" value="ECO:0007669"/>
    <property type="project" value="TreeGrafter"/>
</dbReference>
<dbReference type="GO" id="GO:0052906">
    <property type="term" value="F:tRNA (guanine(37)-N1)-methyltransferase activity"/>
    <property type="evidence" value="ECO:0007669"/>
    <property type="project" value="UniProtKB-UniRule"/>
</dbReference>
<dbReference type="GO" id="GO:0002939">
    <property type="term" value="P:tRNA N1-guanine methylation"/>
    <property type="evidence" value="ECO:0007669"/>
    <property type="project" value="TreeGrafter"/>
</dbReference>
<dbReference type="CDD" id="cd18080">
    <property type="entry name" value="TrmD-like"/>
    <property type="match status" value="1"/>
</dbReference>
<dbReference type="FunFam" id="1.10.1270.20:FF:000001">
    <property type="entry name" value="tRNA (guanine-N(1)-)-methyltransferase"/>
    <property type="match status" value="1"/>
</dbReference>
<dbReference type="FunFam" id="3.40.1280.10:FF:000001">
    <property type="entry name" value="tRNA (guanine-N(1)-)-methyltransferase"/>
    <property type="match status" value="1"/>
</dbReference>
<dbReference type="Gene3D" id="3.40.1280.10">
    <property type="match status" value="1"/>
</dbReference>
<dbReference type="Gene3D" id="1.10.1270.20">
    <property type="entry name" value="tRNA(m1g37)methyltransferase, domain 2"/>
    <property type="match status" value="1"/>
</dbReference>
<dbReference type="HAMAP" id="MF_00605">
    <property type="entry name" value="TrmD"/>
    <property type="match status" value="1"/>
</dbReference>
<dbReference type="InterPro" id="IPR029028">
    <property type="entry name" value="Alpha/beta_knot_MTases"/>
</dbReference>
<dbReference type="InterPro" id="IPR023148">
    <property type="entry name" value="tRNA_m1G_MeTrfase_C_sf"/>
</dbReference>
<dbReference type="InterPro" id="IPR002649">
    <property type="entry name" value="tRNA_m1G_MeTrfase_TrmD"/>
</dbReference>
<dbReference type="InterPro" id="IPR029026">
    <property type="entry name" value="tRNA_m1G_MTases_N"/>
</dbReference>
<dbReference type="InterPro" id="IPR016009">
    <property type="entry name" value="tRNA_MeTrfase_TRMD/TRM10"/>
</dbReference>
<dbReference type="NCBIfam" id="NF000648">
    <property type="entry name" value="PRK00026.1"/>
    <property type="match status" value="1"/>
</dbReference>
<dbReference type="NCBIfam" id="TIGR00088">
    <property type="entry name" value="trmD"/>
    <property type="match status" value="1"/>
</dbReference>
<dbReference type="PANTHER" id="PTHR46417">
    <property type="entry name" value="TRNA (GUANINE-N(1)-)-METHYLTRANSFERASE"/>
    <property type="match status" value="1"/>
</dbReference>
<dbReference type="PANTHER" id="PTHR46417:SF1">
    <property type="entry name" value="TRNA (GUANINE-N(1)-)-METHYLTRANSFERASE"/>
    <property type="match status" value="1"/>
</dbReference>
<dbReference type="Pfam" id="PF01746">
    <property type="entry name" value="tRNA_m1G_MT"/>
    <property type="match status" value="1"/>
</dbReference>
<dbReference type="PIRSF" id="PIRSF000386">
    <property type="entry name" value="tRNA_mtase"/>
    <property type="match status" value="1"/>
</dbReference>
<dbReference type="SUPFAM" id="SSF75217">
    <property type="entry name" value="alpha/beta knot"/>
    <property type="match status" value="1"/>
</dbReference>
<keyword id="KW-0963">Cytoplasm</keyword>
<keyword id="KW-0489">Methyltransferase</keyword>
<keyword id="KW-1185">Reference proteome</keyword>
<keyword id="KW-0949">S-adenosyl-L-methionine</keyword>
<keyword id="KW-0808">Transferase</keyword>
<keyword id="KW-0819">tRNA processing</keyword>
<gene>
    <name evidence="1" type="primary">trmD</name>
    <name type="ordered locus">Sfri_2918</name>
</gene>
<accession>Q07Z07</accession>
<evidence type="ECO:0000255" key="1">
    <source>
        <dbReference type="HAMAP-Rule" id="MF_00605"/>
    </source>
</evidence>
<organism>
    <name type="scientific">Shewanella frigidimarina (strain NCIMB 400)</name>
    <dbReference type="NCBI Taxonomy" id="318167"/>
    <lineage>
        <taxon>Bacteria</taxon>
        <taxon>Pseudomonadati</taxon>
        <taxon>Pseudomonadota</taxon>
        <taxon>Gammaproteobacteria</taxon>
        <taxon>Alteromonadales</taxon>
        <taxon>Shewanellaceae</taxon>
        <taxon>Shewanella</taxon>
    </lineage>
</organism>
<reference key="1">
    <citation type="submission" date="2006-08" db="EMBL/GenBank/DDBJ databases">
        <title>Complete sequence of Shewanella frigidimarina NCIMB 400.</title>
        <authorList>
            <consortium name="US DOE Joint Genome Institute"/>
            <person name="Copeland A."/>
            <person name="Lucas S."/>
            <person name="Lapidus A."/>
            <person name="Barry K."/>
            <person name="Detter J.C."/>
            <person name="Glavina del Rio T."/>
            <person name="Hammon N."/>
            <person name="Israni S."/>
            <person name="Dalin E."/>
            <person name="Tice H."/>
            <person name="Pitluck S."/>
            <person name="Fredrickson J.K."/>
            <person name="Kolker E."/>
            <person name="McCuel L.A."/>
            <person name="DiChristina T."/>
            <person name="Nealson K.H."/>
            <person name="Newman D."/>
            <person name="Tiedje J.M."/>
            <person name="Zhou J."/>
            <person name="Romine M.F."/>
            <person name="Culley D.E."/>
            <person name="Serres M."/>
            <person name="Chertkov O."/>
            <person name="Brettin T."/>
            <person name="Bruce D."/>
            <person name="Han C."/>
            <person name="Tapia R."/>
            <person name="Gilna P."/>
            <person name="Schmutz J."/>
            <person name="Larimer F."/>
            <person name="Land M."/>
            <person name="Hauser L."/>
            <person name="Kyrpides N."/>
            <person name="Mikhailova N."/>
            <person name="Richardson P."/>
        </authorList>
    </citation>
    <scope>NUCLEOTIDE SEQUENCE [LARGE SCALE GENOMIC DNA]</scope>
    <source>
        <strain>NCIMB 400</strain>
    </source>
</reference>
<sequence>MWLGVITLFPEMFRAVTDFGVTGRAVKNGLLEVQTWNPRDFTHDRHNTVDDRPYGGGPGMLMMVQPLRDAIHAAKAAAGDRAKVIYLSPQGRKLDQHGVTELAKSECLILVCGRYEGVDERIIQTEVDEEWSIGDYVLSGGELPAMTLIDSVARLVPGVLGKQASAEQDSFSDGLLDCPHYTRPEQLDGLDVPAVLLSGDHEKIRLWRLQQSIGRTFLRRPELFENLALTDEQTTLLAQFVNETDKSA</sequence>
<comment type="function">
    <text evidence="1">Specifically methylates guanosine-37 in various tRNAs.</text>
</comment>
<comment type="catalytic activity">
    <reaction evidence="1">
        <text>guanosine(37) in tRNA + S-adenosyl-L-methionine = N(1)-methylguanosine(37) in tRNA + S-adenosyl-L-homocysteine + H(+)</text>
        <dbReference type="Rhea" id="RHEA:36899"/>
        <dbReference type="Rhea" id="RHEA-COMP:10145"/>
        <dbReference type="Rhea" id="RHEA-COMP:10147"/>
        <dbReference type="ChEBI" id="CHEBI:15378"/>
        <dbReference type="ChEBI" id="CHEBI:57856"/>
        <dbReference type="ChEBI" id="CHEBI:59789"/>
        <dbReference type="ChEBI" id="CHEBI:73542"/>
        <dbReference type="ChEBI" id="CHEBI:74269"/>
        <dbReference type="EC" id="2.1.1.228"/>
    </reaction>
</comment>
<comment type="subunit">
    <text evidence="1">Homodimer.</text>
</comment>
<comment type="subcellular location">
    <subcellularLocation>
        <location evidence="1">Cytoplasm</location>
    </subcellularLocation>
</comment>
<comment type="similarity">
    <text evidence="1">Belongs to the RNA methyltransferase TrmD family.</text>
</comment>
<feature type="chain" id="PRO_1000006516" description="tRNA (guanine-N(1)-)-methyltransferase">
    <location>
        <begin position="1"/>
        <end position="248"/>
    </location>
</feature>
<feature type="binding site" evidence="1">
    <location>
        <position position="113"/>
    </location>
    <ligand>
        <name>S-adenosyl-L-methionine</name>
        <dbReference type="ChEBI" id="CHEBI:59789"/>
    </ligand>
</feature>
<feature type="binding site" evidence="1">
    <location>
        <begin position="133"/>
        <end position="138"/>
    </location>
    <ligand>
        <name>S-adenosyl-L-methionine</name>
        <dbReference type="ChEBI" id="CHEBI:59789"/>
    </ligand>
</feature>
<proteinExistence type="inferred from homology"/>